<sequence length="568" mass="63701">MLFKELVSLYESLRSTSSRLEKTAMIAAFLQQAPVDELPVIVTFLTGRIFPEWDQRKIGIASQSMIKIISTITHNPEDAVVESYKKTGHLGVTAEEMFQKRRQVTFFEPEDITVKEVAETFYEIARSSGAGSSAKKQKILIGLLHRATTPKEAHYIVSLTIEYVLSGAKEGVMEDAIGQAFGATLDQVRRAHMLTSDLGETARIAKTEGAAGLEAITIRPMRPVRPMLAQNVSSIREALDTMGGVAEFEMKYDGARLQIHKVGKDVKLYSRRLEDLTDALPEIVGYVRESVKSDTAILDSECIAIDKDTGRPIPFQNILTRLRRIHKVEETQKQFPLILRPFDVLFNQGQSTIDLPLRERRKILEEIVIATDSVIQPARALVTDQEEKAQELFEESVKSGNEGLMGKDLNATYTPGVRGKKMVKIKSVLDTLDLAIVSAEWGHGRKAGWLTSFEVAALDEETGDYVILGRVASGFSDEQLIEMTEKLKPLITGEHGRIVDVRPEIIVEVKFEEIQKSPIYSSGYALRFPRLVRVRDDLSPEEVNSFTRVMNIYNVQQRYSISENGLRK</sequence>
<comment type="function">
    <text evidence="1">DNA ligase that seals nicks in double-stranded DNA during DNA replication, DNA recombination and DNA repair.</text>
</comment>
<comment type="catalytic activity">
    <reaction evidence="1">
        <text>ATP + (deoxyribonucleotide)n-3'-hydroxyl + 5'-phospho-(deoxyribonucleotide)m = (deoxyribonucleotide)n+m + AMP + diphosphate.</text>
        <dbReference type="EC" id="6.5.1.1"/>
    </reaction>
</comment>
<comment type="cofactor">
    <cofactor evidence="1">
        <name>Mg(2+)</name>
        <dbReference type="ChEBI" id="CHEBI:18420"/>
    </cofactor>
</comment>
<comment type="similarity">
    <text evidence="1">Belongs to the ATP-dependent DNA ligase family.</text>
</comment>
<reference key="1">
    <citation type="journal article" date="2006" name="Science">
        <title>Genome of rice cluster I archaea -- the key methane producers in the rice rhizosphere.</title>
        <authorList>
            <person name="Erkel C."/>
            <person name="Kube M."/>
            <person name="Reinhardt R."/>
            <person name="Liesack W."/>
        </authorList>
    </citation>
    <scope>NUCLEOTIDE SEQUENCE [LARGE SCALE GENOMIC DNA]</scope>
    <source>
        <strain>DSM 22066 / NBRC 105507 / MRE50</strain>
    </source>
</reference>
<accession>Q0W0X1</accession>
<evidence type="ECO:0000255" key="1">
    <source>
        <dbReference type="HAMAP-Rule" id="MF_00407"/>
    </source>
</evidence>
<dbReference type="EC" id="6.5.1.1" evidence="1"/>
<dbReference type="EMBL" id="AM114193">
    <property type="protein sequence ID" value="CAJ37972.1"/>
    <property type="molecule type" value="Genomic_DNA"/>
</dbReference>
<dbReference type="RefSeq" id="WP_012034623.1">
    <property type="nucleotide sequence ID" value="NC_009464.1"/>
</dbReference>
<dbReference type="SMR" id="Q0W0X1"/>
<dbReference type="STRING" id="351160.RRC227"/>
<dbReference type="GeneID" id="5143728"/>
<dbReference type="KEGG" id="rci:RRC227"/>
<dbReference type="PATRIC" id="fig|351160.9.peg.310"/>
<dbReference type="eggNOG" id="arCOG01347">
    <property type="taxonomic scope" value="Archaea"/>
</dbReference>
<dbReference type="OrthoDB" id="31274at2157"/>
<dbReference type="Proteomes" id="UP000000663">
    <property type="component" value="Chromosome"/>
</dbReference>
<dbReference type="GO" id="GO:0005524">
    <property type="term" value="F:ATP binding"/>
    <property type="evidence" value="ECO:0007669"/>
    <property type="project" value="UniProtKB-UniRule"/>
</dbReference>
<dbReference type="GO" id="GO:0003677">
    <property type="term" value="F:DNA binding"/>
    <property type="evidence" value="ECO:0007669"/>
    <property type="project" value="InterPro"/>
</dbReference>
<dbReference type="GO" id="GO:0003910">
    <property type="term" value="F:DNA ligase (ATP) activity"/>
    <property type="evidence" value="ECO:0007669"/>
    <property type="project" value="UniProtKB-UniRule"/>
</dbReference>
<dbReference type="GO" id="GO:0046872">
    <property type="term" value="F:metal ion binding"/>
    <property type="evidence" value="ECO:0007669"/>
    <property type="project" value="UniProtKB-KW"/>
</dbReference>
<dbReference type="GO" id="GO:0051301">
    <property type="term" value="P:cell division"/>
    <property type="evidence" value="ECO:0007669"/>
    <property type="project" value="UniProtKB-KW"/>
</dbReference>
<dbReference type="GO" id="GO:0071897">
    <property type="term" value="P:DNA biosynthetic process"/>
    <property type="evidence" value="ECO:0007669"/>
    <property type="project" value="InterPro"/>
</dbReference>
<dbReference type="GO" id="GO:0006310">
    <property type="term" value="P:DNA recombination"/>
    <property type="evidence" value="ECO:0007669"/>
    <property type="project" value="UniProtKB-UniRule"/>
</dbReference>
<dbReference type="GO" id="GO:0006281">
    <property type="term" value="P:DNA repair"/>
    <property type="evidence" value="ECO:0007669"/>
    <property type="project" value="UniProtKB-UniRule"/>
</dbReference>
<dbReference type="GO" id="GO:0006273">
    <property type="term" value="P:lagging strand elongation"/>
    <property type="evidence" value="ECO:0007669"/>
    <property type="project" value="TreeGrafter"/>
</dbReference>
<dbReference type="CDD" id="cd07901">
    <property type="entry name" value="Adenylation_DNA_ligase_Arch_LigB"/>
    <property type="match status" value="1"/>
</dbReference>
<dbReference type="CDD" id="cd07972">
    <property type="entry name" value="OBF_DNA_ligase_Arch_LigB"/>
    <property type="match status" value="1"/>
</dbReference>
<dbReference type="Gene3D" id="1.10.3260.10">
    <property type="entry name" value="DNA ligase, ATP-dependent, N-terminal domain"/>
    <property type="match status" value="1"/>
</dbReference>
<dbReference type="Gene3D" id="3.30.470.30">
    <property type="entry name" value="DNA ligase/mRNA capping enzyme"/>
    <property type="match status" value="1"/>
</dbReference>
<dbReference type="Gene3D" id="2.40.50.140">
    <property type="entry name" value="Nucleic acid-binding proteins"/>
    <property type="match status" value="1"/>
</dbReference>
<dbReference type="HAMAP" id="MF_00407">
    <property type="entry name" value="DNA_ligase"/>
    <property type="match status" value="1"/>
</dbReference>
<dbReference type="InterPro" id="IPR050191">
    <property type="entry name" value="ATP-dep_DNA_ligase"/>
</dbReference>
<dbReference type="InterPro" id="IPR022865">
    <property type="entry name" value="DNA_ligae_ATP-dep_bac/arc"/>
</dbReference>
<dbReference type="InterPro" id="IPR000977">
    <property type="entry name" value="DNA_ligase_ATP-dep"/>
</dbReference>
<dbReference type="InterPro" id="IPR012309">
    <property type="entry name" value="DNA_ligase_ATP-dep_C"/>
</dbReference>
<dbReference type="InterPro" id="IPR012310">
    <property type="entry name" value="DNA_ligase_ATP-dep_cent"/>
</dbReference>
<dbReference type="InterPro" id="IPR012308">
    <property type="entry name" value="DNA_ligase_ATP-dep_N"/>
</dbReference>
<dbReference type="InterPro" id="IPR036599">
    <property type="entry name" value="DNA_ligase_N_sf"/>
</dbReference>
<dbReference type="InterPro" id="IPR012340">
    <property type="entry name" value="NA-bd_OB-fold"/>
</dbReference>
<dbReference type="NCBIfam" id="TIGR00574">
    <property type="entry name" value="dnl1"/>
    <property type="match status" value="1"/>
</dbReference>
<dbReference type="PANTHER" id="PTHR45674:SF7">
    <property type="entry name" value="DNA LIGASE"/>
    <property type="match status" value="1"/>
</dbReference>
<dbReference type="PANTHER" id="PTHR45674">
    <property type="entry name" value="DNA LIGASE 1/3 FAMILY MEMBER"/>
    <property type="match status" value="1"/>
</dbReference>
<dbReference type="Pfam" id="PF04679">
    <property type="entry name" value="DNA_ligase_A_C"/>
    <property type="match status" value="1"/>
</dbReference>
<dbReference type="Pfam" id="PF01068">
    <property type="entry name" value="DNA_ligase_A_M"/>
    <property type="match status" value="1"/>
</dbReference>
<dbReference type="Pfam" id="PF04675">
    <property type="entry name" value="DNA_ligase_A_N"/>
    <property type="match status" value="1"/>
</dbReference>
<dbReference type="SUPFAM" id="SSF117018">
    <property type="entry name" value="ATP-dependent DNA ligase DNA-binding domain"/>
    <property type="match status" value="1"/>
</dbReference>
<dbReference type="SUPFAM" id="SSF56091">
    <property type="entry name" value="DNA ligase/mRNA capping enzyme, catalytic domain"/>
    <property type="match status" value="1"/>
</dbReference>
<dbReference type="SUPFAM" id="SSF50249">
    <property type="entry name" value="Nucleic acid-binding proteins"/>
    <property type="match status" value="1"/>
</dbReference>
<dbReference type="PROSITE" id="PS50160">
    <property type="entry name" value="DNA_LIGASE_A3"/>
    <property type="match status" value="1"/>
</dbReference>
<protein>
    <recommendedName>
        <fullName evidence="1">DNA ligase</fullName>
        <ecNumber evidence="1">6.5.1.1</ecNumber>
    </recommendedName>
    <alternativeName>
        <fullName evidence="1">Polydeoxyribonucleotide synthase [ATP]</fullName>
    </alternativeName>
</protein>
<organism>
    <name type="scientific">Methanocella arvoryzae (strain DSM 22066 / NBRC 105507 / MRE50)</name>
    <dbReference type="NCBI Taxonomy" id="351160"/>
    <lineage>
        <taxon>Archaea</taxon>
        <taxon>Methanobacteriati</taxon>
        <taxon>Methanobacteriota</taxon>
        <taxon>Stenosarchaea group</taxon>
        <taxon>Methanomicrobia</taxon>
        <taxon>Methanocellales</taxon>
        <taxon>Methanocellaceae</taxon>
        <taxon>Methanocella</taxon>
    </lineage>
</organism>
<gene>
    <name evidence="1" type="primary">lig</name>
    <name type="ordered locus">UNCMA_02940</name>
    <name type="ORF">RRC227</name>
</gene>
<proteinExistence type="inferred from homology"/>
<feature type="chain" id="PRO_0000365268" description="DNA ligase">
    <location>
        <begin position="1"/>
        <end position="568"/>
    </location>
</feature>
<feature type="active site" description="N6-AMP-lysine intermediate" evidence="1">
    <location>
        <position position="251"/>
    </location>
</feature>
<feature type="binding site" evidence="1">
    <location>
        <position position="249"/>
    </location>
    <ligand>
        <name>ATP</name>
        <dbReference type="ChEBI" id="CHEBI:30616"/>
    </ligand>
</feature>
<feature type="binding site" evidence="1">
    <location>
        <position position="256"/>
    </location>
    <ligand>
        <name>ATP</name>
        <dbReference type="ChEBI" id="CHEBI:30616"/>
    </ligand>
</feature>
<feature type="binding site" evidence="1">
    <location>
        <position position="271"/>
    </location>
    <ligand>
        <name>ATP</name>
        <dbReference type="ChEBI" id="CHEBI:30616"/>
    </ligand>
</feature>
<feature type="binding site" evidence="1">
    <location>
        <position position="301"/>
    </location>
    <ligand>
        <name>ATP</name>
        <dbReference type="ChEBI" id="CHEBI:30616"/>
    </ligand>
</feature>
<feature type="binding site" evidence="1">
    <location>
        <position position="342"/>
    </location>
    <ligand>
        <name>ATP</name>
        <dbReference type="ChEBI" id="CHEBI:30616"/>
    </ligand>
</feature>
<feature type="binding site" evidence="1">
    <location>
        <position position="418"/>
    </location>
    <ligand>
        <name>ATP</name>
        <dbReference type="ChEBI" id="CHEBI:30616"/>
    </ligand>
</feature>
<feature type="binding site" evidence="1">
    <location>
        <position position="424"/>
    </location>
    <ligand>
        <name>ATP</name>
        <dbReference type="ChEBI" id="CHEBI:30616"/>
    </ligand>
</feature>
<name>DNLI_METAR</name>
<keyword id="KW-0067">ATP-binding</keyword>
<keyword id="KW-0131">Cell cycle</keyword>
<keyword id="KW-0132">Cell division</keyword>
<keyword id="KW-0227">DNA damage</keyword>
<keyword id="KW-0233">DNA recombination</keyword>
<keyword id="KW-0234">DNA repair</keyword>
<keyword id="KW-0235">DNA replication</keyword>
<keyword id="KW-0436">Ligase</keyword>
<keyword id="KW-0460">Magnesium</keyword>
<keyword id="KW-0479">Metal-binding</keyword>
<keyword id="KW-0547">Nucleotide-binding</keyword>
<keyword id="KW-1185">Reference proteome</keyword>